<sequence>CLSVCSMEYWPVCGSDGKTYPNECHLTSEACMSNTDITVAHVGKCDQ</sequence>
<organism>
    <name type="scientific">Iotyrris cingulifera</name>
    <name type="common">Sea snail</name>
    <name type="synonym">Pleurotoma cingulifera</name>
    <dbReference type="NCBI Taxonomy" id="553733"/>
    <lineage>
        <taxon>Eukaryota</taxon>
        <taxon>Metazoa</taxon>
        <taxon>Spiralia</taxon>
        <taxon>Lophotrochozoa</taxon>
        <taxon>Mollusca</taxon>
        <taxon>Gastropoda</taxon>
        <taxon>Caenogastropoda</taxon>
        <taxon>Neogastropoda</taxon>
        <taxon>Conoidea</taxon>
        <taxon>Turridae</taxon>
        <taxon>Iotyrris</taxon>
    </lineage>
</organism>
<reference key="1">
    <citation type="journal article" date="2006" name="J. Mol. Evol.">
        <title>Genes expressed in a turrid venom duct: divergence and similarity to conotoxins.</title>
        <authorList>
            <person name="Watkins M."/>
            <person name="Hillyard D.R."/>
            <person name="Olivera B.M."/>
        </authorList>
    </citation>
    <scope>NUCLEOTIDE SEQUENCE [MRNA]</scope>
    <source>
        <tissue>Venom duct</tissue>
    </source>
</reference>
<evidence type="ECO:0000250" key="1"/>
<evidence type="ECO:0000255" key="2">
    <source>
        <dbReference type="PROSITE-ProRule" id="PRU00798"/>
    </source>
</evidence>
<evidence type="ECO:0000305" key="3"/>
<comment type="function">
    <text evidence="1">Acts as a neurotoxin by inhibiting an ion channel (By similarity). May also act as a serine protease inhibitor, since it possess the kazal serine protease inhibitor signature.</text>
</comment>
<comment type="subcellular location">
    <subcellularLocation>
        <location evidence="1">Secreted</location>
    </subcellularLocation>
</comment>
<comment type="tissue specificity">
    <text>Expressed by the venom duct.</text>
</comment>
<comment type="domain">
    <text>The cysteine framework is IX (C-C-C-C-C-C).</text>
</comment>
<comment type="similarity">
    <text evidence="3">Belongs to the conopeptide P-like superfamily.</text>
</comment>
<protein>
    <recommendedName>
        <fullName>Turripeptide Ici9.1</fullName>
    </recommendedName>
    <alternativeName>
        <fullName>Turripeptide OL11-like</fullName>
    </alternativeName>
</protein>
<keyword id="KW-1015">Disulfide bond</keyword>
<keyword id="KW-0872">Ion channel impairing toxin</keyword>
<keyword id="KW-0528">Neurotoxin</keyword>
<keyword id="KW-0646">Protease inhibitor</keyword>
<keyword id="KW-0964">Secreted</keyword>
<keyword id="KW-0722">Serine protease inhibitor</keyword>
<keyword id="KW-0800">Toxin</keyword>
<name>TU91_IOTCI</name>
<dbReference type="SMR" id="P0DKM8"/>
<dbReference type="GO" id="GO:0005576">
    <property type="term" value="C:extracellular region"/>
    <property type="evidence" value="ECO:0007669"/>
    <property type="project" value="UniProtKB-SubCell"/>
</dbReference>
<dbReference type="GO" id="GO:0099106">
    <property type="term" value="F:ion channel regulator activity"/>
    <property type="evidence" value="ECO:0007669"/>
    <property type="project" value="UniProtKB-KW"/>
</dbReference>
<dbReference type="GO" id="GO:0004867">
    <property type="term" value="F:serine-type endopeptidase inhibitor activity"/>
    <property type="evidence" value="ECO:0007669"/>
    <property type="project" value="UniProtKB-KW"/>
</dbReference>
<dbReference type="GO" id="GO:0090729">
    <property type="term" value="F:toxin activity"/>
    <property type="evidence" value="ECO:0007669"/>
    <property type="project" value="UniProtKB-KW"/>
</dbReference>
<dbReference type="GO" id="GO:0030154">
    <property type="term" value="P:cell differentiation"/>
    <property type="evidence" value="ECO:0007669"/>
    <property type="project" value="TreeGrafter"/>
</dbReference>
<dbReference type="CDD" id="cd00104">
    <property type="entry name" value="KAZAL_FS"/>
    <property type="match status" value="1"/>
</dbReference>
<dbReference type="Gene3D" id="3.30.60.30">
    <property type="match status" value="1"/>
</dbReference>
<dbReference type="InterPro" id="IPR002350">
    <property type="entry name" value="Kazal_dom"/>
</dbReference>
<dbReference type="InterPro" id="IPR036058">
    <property type="entry name" value="Kazal_dom_sf"/>
</dbReference>
<dbReference type="InterPro" id="IPR050653">
    <property type="entry name" value="Prot_Inhib_GrowthFact_Antg"/>
</dbReference>
<dbReference type="PANTHER" id="PTHR10913:SF45">
    <property type="entry name" value="FOLLISTATIN, ISOFORM A-RELATED"/>
    <property type="match status" value="1"/>
</dbReference>
<dbReference type="PANTHER" id="PTHR10913">
    <property type="entry name" value="FOLLISTATIN-RELATED"/>
    <property type="match status" value="1"/>
</dbReference>
<dbReference type="Pfam" id="PF00050">
    <property type="entry name" value="Kazal_1"/>
    <property type="match status" value="1"/>
</dbReference>
<dbReference type="SMART" id="SM00280">
    <property type="entry name" value="KAZAL"/>
    <property type="match status" value="1"/>
</dbReference>
<dbReference type="SUPFAM" id="SSF100895">
    <property type="entry name" value="Kazal-type serine protease inhibitors"/>
    <property type="match status" value="1"/>
</dbReference>
<dbReference type="PROSITE" id="PS51465">
    <property type="entry name" value="KAZAL_2"/>
    <property type="match status" value="1"/>
</dbReference>
<accession>P0DKM8</accession>
<proteinExistence type="evidence at transcript level"/>
<feature type="chain" id="PRO_0000419842" description="Turripeptide Ici9.1">
    <location>
        <begin position="1" status="less than"/>
        <end position="47"/>
    </location>
</feature>
<feature type="domain" description="Kazal-like" evidence="2">
    <location>
        <begin position="1" status="less than"/>
        <end position="47"/>
    </location>
</feature>
<feature type="site" description="Reactive bond" evidence="2">
    <location>
        <begin position="7"/>
        <end position="8"/>
    </location>
</feature>
<feature type="disulfide bond" evidence="2">
    <location>
        <begin position="1"/>
        <end position="31"/>
    </location>
</feature>
<feature type="disulfide bond" evidence="2">
    <location>
        <begin position="5"/>
        <end position="24"/>
    </location>
</feature>
<feature type="disulfide bond" evidence="2">
    <location>
        <begin position="13"/>
        <end position="45"/>
    </location>
</feature>
<feature type="non-terminal residue">
    <location>
        <position position="1"/>
    </location>
</feature>